<comment type="function">
    <text evidence="1">Catalyzes a proton abstraction reaction that results in 2,5-elimination of pyruvate from 2-succinyl-5-enolpyruvyl-6-hydroxy-3-cyclohexene-1-carboxylate (SEPHCHC) and the formation of 2-succinyl-6-hydroxy-2,4-cyclohexadiene-1-carboxylate (SHCHC).</text>
</comment>
<comment type="catalytic activity">
    <reaction evidence="1">
        <text>5-enolpyruvoyl-6-hydroxy-2-succinyl-cyclohex-3-ene-1-carboxylate = (1R,6R)-6-hydroxy-2-succinyl-cyclohexa-2,4-diene-1-carboxylate + pyruvate</text>
        <dbReference type="Rhea" id="RHEA:25597"/>
        <dbReference type="ChEBI" id="CHEBI:15361"/>
        <dbReference type="ChEBI" id="CHEBI:58689"/>
        <dbReference type="ChEBI" id="CHEBI:58818"/>
        <dbReference type="EC" id="4.2.99.20"/>
    </reaction>
</comment>
<comment type="pathway">
    <text evidence="1">Quinol/quinone metabolism; 1,4-dihydroxy-2-naphthoate biosynthesis; 1,4-dihydroxy-2-naphthoate from chorismate: step 3/7.</text>
</comment>
<comment type="pathway">
    <text evidence="1">Quinol/quinone metabolism; menaquinone biosynthesis.</text>
</comment>
<comment type="subunit">
    <text evidence="1">Monomer.</text>
</comment>
<comment type="similarity">
    <text evidence="1">Belongs to the AB hydrolase superfamily. MenH family.</text>
</comment>
<dbReference type="EC" id="4.2.99.20" evidence="1"/>
<dbReference type="EMBL" id="CP000026">
    <property type="protein sequence ID" value="AAV76557.1"/>
    <property type="molecule type" value="Genomic_DNA"/>
</dbReference>
<dbReference type="RefSeq" id="WP_000979139.1">
    <property type="nucleotide sequence ID" value="NC_006511.1"/>
</dbReference>
<dbReference type="SMR" id="Q5PN75"/>
<dbReference type="ESTHER" id="salty-YFBB">
    <property type="family name" value="MenH_SHCHC"/>
</dbReference>
<dbReference type="KEGG" id="spt:SPA0555"/>
<dbReference type="HOGENOM" id="CLU_020336_38_2_6"/>
<dbReference type="UniPathway" id="UPA00079"/>
<dbReference type="UniPathway" id="UPA01057">
    <property type="reaction ID" value="UER00900"/>
</dbReference>
<dbReference type="Proteomes" id="UP000008185">
    <property type="component" value="Chromosome"/>
</dbReference>
<dbReference type="GO" id="GO:0070205">
    <property type="term" value="F:2-succinyl-6-hydroxy-2,4-cyclohexadiene-1-carboxylate synthase activity"/>
    <property type="evidence" value="ECO:0007669"/>
    <property type="project" value="UniProtKB-UniRule"/>
</dbReference>
<dbReference type="GO" id="GO:0009234">
    <property type="term" value="P:menaquinone biosynthetic process"/>
    <property type="evidence" value="ECO:0007669"/>
    <property type="project" value="UniProtKB-UniRule"/>
</dbReference>
<dbReference type="Gene3D" id="3.40.50.1820">
    <property type="entry name" value="alpha/beta hydrolase"/>
    <property type="match status" value="1"/>
</dbReference>
<dbReference type="HAMAP" id="MF_01660">
    <property type="entry name" value="MenH"/>
    <property type="match status" value="1"/>
</dbReference>
<dbReference type="InterPro" id="IPR000073">
    <property type="entry name" value="AB_hydrolase_1"/>
</dbReference>
<dbReference type="InterPro" id="IPR029058">
    <property type="entry name" value="AB_hydrolase_fold"/>
</dbReference>
<dbReference type="InterPro" id="IPR022485">
    <property type="entry name" value="SHCHC_synthase_MenH"/>
</dbReference>
<dbReference type="NCBIfam" id="TIGR03695">
    <property type="entry name" value="menH_SHCHC"/>
    <property type="match status" value="1"/>
</dbReference>
<dbReference type="NCBIfam" id="NF008340">
    <property type="entry name" value="PRK11126.1"/>
    <property type="match status" value="1"/>
</dbReference>
<dbReference type="PANTHER" id="PTHR42916">
    <property type="entry name" value="2-SUCCINYL-5-ENOLPYRUVYL-6-HYDROXY-3-CYCLOHEXENE-1-CARBOXYLATE SYNTHASE"/>
    <property type="match status" value="1"/>
</dbReference>
<dbReference type="PANTHER" id="PTHR42916:SF1">
    <property type="entry name" value="PROTEIN PHYLLO, CHLOROPLASTIC"/>
    <property type="match status" value="1"/>
</dbReference>
<dbReference type="Pfam" id="PF12697">
    <property type="entry name" value="Abhydrolase_6"/>
    <property type="match status" value="1"/>
</dbReference>
<dbReference type="SUPFAM" id="SSF53474">
    <property type="entry name" value="alpha/beta-Hydrolases"/>
    <property type="match status" value="1"/>
</dbReference>
<proteinExistence type="inferred from homology"/>
<protein>
    <recommendedName>
        <fullName evidence="1">2-succinyl-6-hydroxy-2,4-cyclohexadiene-1-carboxylate synthase</fullName>
        <shortName evidence="1">SHCHC synthase</shortName>
        <ecNumber evidence="1">4.2.99.20</ecNumber>
    </recommendedName>
</protein>
<evidence type="ECO:0000255" key="1">
    <source>
        <dbReference type="HAMAP-Rule" id="MF_01660"/>
    </source>
</evidence>
<reference key="1">
    <citation type="journal article" date="2004" name="Nat. Genet.">
        <title>Comparison of genome degradation in Paratyphi A and Typhi, human-restricted serovars of Salmonella enterica that cause typhoid.</title>
        <authorList>
            <person name="McClelland M."/>
            <person name="Sanderson K.E."/>
            <person name="Clifton S.W."/>
            <person name="Latreille P."/>
            <person name="Porwollik S."/>
            <person name="Sabo A."/>
            <person name="Meyer R."/>
            <person name="Bieri T."/>
            <person name="Ozersky P."/>
            <person name="McLellan M."/>
            <person name="Harkins C.R."/>
            <person name="Wang C."/>
            <person name="Nguyen C."/>
            <person name="Berghoff A."/>
            <person name="Elliott G."/>
            <person name="Kohlberg S."/>
            <person name="Strong C."/>
            <person name="Du F."/>
            <person name="Carter J."/>
            <person name="Kremizki C."/>
            <person name="Layman D."/>
            <person name="Leonard S."/>
            <person name="Sun H."/>
            <person name="Fulton L."/>
            <person name="Nash W."/>
            <person name="Miner T."/>
            <person name="Minx P."/>
            <person name="Delehaunty K."/>
            <person name="Fronick C."/>
            <person name="Magrini V."/>
            <person name="Nhan M."/>
            <person name="Warren W."/>
            <person name="Florea L."/>
            <person name="Spieth J."/>
            <person name="Wilson R.K."/>
        </authorList>
    </citation>
    <scope>NUCLEOTIDE SEQUENCE [LARGE SCALE GENOMIC DNA]</scope>
    <source>
        <strain>ATCC 9150 / SARB42</strain>
    </source>
</reference>
<organism>
    <name type="scientific">Salmonella paratyphi A (strain ATCC 9150 / SARB42)</name>
    <dbReference type="NCBI Taxonomy" id="295319"/>
    <lineage>
        <taxon>Bacteria</taxon>
        <taxon>Pseudomonadati</taxon>
        <taxon>Pseudomonadota</taxon>
        <taxon>Gammaproteobacteria</taxon>
        <taxon>Enterobacterales</taxon>
        <taxon>Enterobacteriaceae</taxon>
        <taxon>Salmonella</taxon>
    </lineage>
</organism>
<gene>
    <name evidence="1" type="primary">menH</name>
    <name type="ordered locus">SPA0555</name>
</gene>
<name>MENH_SALPA</name>
<sequence>MMLHAQHMPGQPGAPSLVFLHGFSGDCREWQPVGEQFHGCSRLYIDLPGHGGSAAIPVGGFADVIRLLRATLISYNILKFWLVGYSLGGRVAMMAACQGIPGLCGLVVEGGHPGLQNERARAERRLSDGRWAERFRHEPLTEVFHDWYQQPVFASLTAQQRQALTALRSQNNGETLAAMLEATSLAVQPDLREALNALAFPFYYLCGERDSKFRALAQEVAATCHVIRNAGHNAHRENPAGVVDSLAQILRL</sequence>
<keyword id="KW-0456">Lyase</keyword>
<keyword id="KW-0474">Menaquinone biosynthesis</keyword>
<feature type="chain" id="PRO_0000341919" description="2-succinyl-6-hydroxy-2,4-cyclohexadiene-1-carboxylate synthase">
    <location>
        <begin position="1"/>
        <end position="252"/>
    </location>
</feature>
<accession>Q5PN75</accession>